<gene>
    <name type="primary">fhaB</name>
    <name type="synonym">fipA</name>
    <name type="ordered locus">MT0022</name>
</gene>
<evidence type="ECO:0000250" key="1">
    <source>
        <dbReference type="UniProtKB" id="P9WJB5"/>
    </source>
</evidence>
<evidence type="ECO:0000255" key="2"/>
<evidence type="ECO:0000255" key="3">
    <source>
        <dbReference type="PROSITE-ProRule" id="PRU00086"/>
    </source>
</evidence>
<organism>
    <name type="scientific">Mycobacterium tuberculosis (strain CDC 1551 / Oshkosh)</name>
    <dbReference type="NCBI Taxonomy" id="83331"/>
    <lineage>
        <taxon>Bacteria</taxon>
        <taxon>Bacillati</taxon>
        <taxon>Actinomycetota</taxon>
        <taxon>Actinomycetes</taxon>
        <taxon>Mycobacteriales</taxon>
        <taxon>Mycobacteriaceae</taxon>
        <taxon>Mycobacterium</taxon>
        <taxon>Mycobacterium tuberculosis complex</taxon>
    </lineage>
</organism>
<protein>
    <recommendedName>
        <fullName>FHA domain-containing protein FhaB</fullName>
    </recommendedName>
    <alternativeName>
        <fullName>FtsZ-interacting protein A</fullName>
    </alternativeName>
</protein>
<reference key="1">
    <citation type="journal article" date="2002" name="J. Bacteriol.">
        <title>Whole-genome comparison of Mycobacterium tuberculosis clinical and laboratory strains.</title>
        <authorList>
            <person name="Fleischmann R.D."/>
            <person name="Alland D."/>
            <person name="Eisen J.A."/>
            <person name="Carpenter L."/>
            <person name="White O."/>
            <person name="Peterson J.D."/>
            <person name="DeBoy R.T."/>
            <person name="Dodson R.J."/>
            <person name="Gwinn M.L."/>
            <person name="Haft D.H."/>
            <person name="Hickey E.K."/>
            <person name="Kolonay J.F."/>
            <person name="Nelson W.C."/>
            <person name="Umayam L.A."/>
            <person name="Ermolaeva M.D."/>
            <person name="Salzberg S.L."/>
            <person name="Delcher A."/>
            <person name="Utterback T.R."/>
            <person name="Weidman J.F."/>
            <person name="Khouri H.M."/>
            <person name="Gill J."/>
            <person name="Mikula A."/>
            <person name="Bishai W."/>
            <person name="Jacobs W.R. Jr."/>
            <person name="Venter J.C."/>
            <person name="Fraser C.M."/>
        </authorList>
    </citation>
    <scope>NUCLEOTIDE SEQUENCE [LARGE SCALE GENOMIC DNA]</scope>
    <source>
        <strain>CDC 1551 / Oshkosh</strain>
    </source>
</reference>
<feature type="chain" id="PRO_0000427859" description="FHA domain-containing protein FhaB">
    <location>
        <begin position="1"/>
        <end position="155"/>
    </location>
</feature>
<feature type="transmembrane region" description="Helical" evidence="2">
    <location>
        <begin position="6"/>
        <end position="28"/>
    </location>
</feature>
<feature type="domain" description="FHA" evidence="3">
    <location>
        <begin position="83"/>
        <end position="132"/>
    </location>
</feature>
<feature type="modified residue" description="Phosphothreonine" evidence="1">
    <location>
        <position position="36"/>
    </location>
</feature>
<accession>P9WJB4</accession>
<accession>F2GPM3</accession>
<accession>L0T5G4</accession>
<accession>P71589</accession>
<accession>Q7DAK4</accession>
<comment type="subcellular location">
    <subcellularLocation>
        <location evidence="1">Cell membrane</location>
        <topology evidence="2">Single-pass membrane protein</topology>
    </subcellularLocation>
</comment>
<comment type="PTM">
    <text evidence="1">Phosphorylated by PknB (By similarity). Dephosphorylated by PstP (By similarity).</text>
</comment>
<keyword id="KW-1003">Cell membrane</keyword>
<keyword id="KW-0472">Membrane</keyword>
<keyword id="KW-0597">Phosphoprotein</keyword>
<keyword id="KW-1185">Reference proteome</keyword>
<keyword id="KW-0812">Transmembrane</keyword>
<keyword id="KW-1133">Transmembrane helix</keyword>
<dbReference type="EMBL" id="AE000516">
    <property type="protein sequence ID" value="AAK44244.1"/>
    <property type="molecule type" value="Genomic_DNA"/>
</dbReference>
<dbReference type="PIR" id="A70700">
    <property type="entry name" value="A70700"/>
</dbReference>
<dbReference type="RefSeq" id="WP_003400373.1">
    <property type="nucleotide sequence ID" value="NZ_KK341227.1"/>
</dbReference>
<dbReference type="SMR" id="P9WJB4"/>
<dbReference type="KEGG" id="mtc:MT0022"/>
<dbReference type="PATRIC" id="fig|83331.31.peg.23"/>
<dbReference type="HOGENOM" id="CLU_131367_0_0_11"/>
<dbReference type="Proteomes" id="UP000001020">
    <property type="component" value="Chromosome"/>
</dbReference>
<dbReference type="GO" id="GO:0005886">
    <property type="term" value="C:plasma membrane"/>
    <property type="evidence" value="ECO:0007669"/>
    <property type="project" value="UniProtKB-SubCell"/>
</dbReference>
<dbReference type="CDD" id="cd22693">
    <property type="entry name" value="FHA_FhaB-like"/>
    <property type="match status" value="1"/>
</dbReference>
<dbReference type="FunFam" id="2.60.200.20:FF:000032">
    <property type="entry name" value="FHA domain-containing protein"/>
    <property type="match status" value="1"/>
</dbReference>
<dbReference type="Gene3D" id="2.60.200.20">
    <property type="match status" value="1"/>
</dbReference>
<dbReference type="InterPro" id="IPR050923">
    <property type="entry name" value="Cell_Proc_Reg/RNA_Proc"/>
</dbReference>
<dbReference type="InterPro" id="IPR000253">
    <property type="entry name" value="FHA_dom"/>
</dbReference>
<dbReference type="InterPro" id="IPR008984">
    <property type="entry name" value="SMAD_FHA_dom_sf"/>
</dbReference>
<dbReference type="PANTHER" id="PTHR23308">
    <property type="entry name" value="NUCLEAR INHIBITOR OF PROTEIN PHOSPHATASE-1"/>
    <property type="match status" value="1"/>
</dbReference>
<dbReference type="Pfam" id="PF00498">
    <property type="entry name" value="FHA"/>
    <property type="match status" value="1"/>
</dbReference>
<dbReference type="SMART" id="SM00240">
    <property type="entry name" value="FHA"/>
    <property type="match status" value="1"/>
</dbReference>
<dbReference type="SUPFAM" id="SSF49879">
    <property type="entry name" value="SMAD/FHA domain"/>
    <property type="match status" value="1"/>
</dbReference>
<dbReference type="PROSITE" id="PS50006">
    <property type="entry name" value="FHA_DOMAIN"/>
    <property type="match status" value="1"/>
</dbReference>
<sequence length="155" mass="17152">MQGLVLQLTRAGFLMLLWVFIWSVLRILKTDIYAPTGAVMMRRGLALRGTLLGARQRRHAARYLVVTEGALTGARITLSEQPVLIGRADDSTLVLTDDYASTRHARLSMRGSEWYVEDLGSTNGTYLDRAKVTTAVRVPIGTPVRIGKTAIELRP</sequence>
<name>FHAB_MYCTO</name>
<proteinExistence type="inferred from homology"/>